<proteinExistence type="evidence at protein level"/>
<name>PTF_ASPTN</name>
<reference key="1">
    <citation type="submission" date="2005-09" db="EMBL/GenBank/DDBJ databases">
        <title>Annotation of the Aspergillus terreus NIH2624 genome.</title>
        <authorList>
            <person name="Birren B.W."/>
            <person name="Lander E.S."/>
            <person name="Galagan J.E."/>
            <person name="Nusbaum C."/>
            <person name="Devon K."/>
            <person name="Henn M."/>
            <person name="Ma L.-J."/>
            <person name="Jaffe D.B."/>
            <person name="Butler J."/>
            <person name="Alvarez P."/>
            <person name="Gnerre S."/>
            <person name="Grabherr M."/>
            <person name="Kleber M."/>
            <person name="Mauceli E.W."/>
            <person name="Brockman W."/>
            <person name="Rounsley S."/>
            <person name="Young S.K."/>
            <person name="LaButti K."/>
            <person name="Pushparaj V."/>
            <person name="DeCaprio D."/>
            <person name="Crawford M."/>
            <person name="Koehrsen M."/>
            <person name="Engels R."/>
            <person name="Montgomery P."/>
            <person name="Pearson M."/>
            <person name="Howarth C."/>
            <person name="Larson L."/>
            <person name="Luoma S."/>
            <person name="White J."/>
            <person name="Alvarado L."/>
            <person name="Kodira C.D."/>
            <person name="Zeng Q."/>
            <person name="Oleary S."/>
            <person name="Yandava C."/>
            <person name="Denning D.W."/>
            <person name="Nierman W.C."/>
            <person name="Milne T."/>
            <person name="Madden K."/>
        </authorList>
    </citation>
    <scope>NUCLEOTIDE SEQUENCE [LARGE SCALE GENOMIC DNA]</scope>
    <source>
        <strain>NIH 2624 / FGSC A1156</strain>
    </source>
</reference>
<reference key="2">
    <citation type="journal article" date="2010" name="J. Biol. Chem.">
        <title>A new group of aromatic prenyltransferases in fungi, catalyzing a 2,7-dihydroxynaphthalene 3-dimethylallyl-transferase reaction.</title>
        <authorList>
            <person name="Haug-Schifferdecker E."/>
            <person name="Arican D."/>
            <person name="Brueckner R."/>
            <person name="Heide L."/>
        </authorList>
    </citation>
    <scope>FUNCTION</scope>
    <scope>CATALYTIC ACTIVITY</scope>
    <scope>BIOPHYSICOCHEMICAL PROPERTIES</scope>
    <scope>SUBSTRATE SPECIFICITY</scope>
</reference>
<protein>
    <recommendedName>
        <fullName evidence="2">Aromatic prenyltransferase</fullName>
        <ecNumber evidence="1">2.5.1.-</ecNumber>
    </recommendedName>
</protein>
<organism>
    <name type="scientific">Aspergillus terreus (strain NIH 2624 / FGSC A1156)</name>
    <dbReference type="NCBI Taxonomy" id="341663"/>
    <lineage>
        <taxon>Eukaryota</taxon>
        <taxon>Fungi</taxon>
        <taxon>Dikarya</taxon>
        <taxon>Ascomycota</taxon>
        <taxon>Pezizomycotina</taxon>
        <taxon>Eurotiomycetes</taxon>
        <taxon>Eurotiomycetidae</taxon>
        <taxon>Eurotiales</taxon>
        <taxon>Aspergillaceae</taxon>
        <taxon>Aspergillus</taxon>
        <taxon>Aspergillus subgen. Circumdati</taxon>
    </lineage>
</organism>
<accession>Q0CZR3</accession>
<comment type="function">
    <text evidence="1">Prenyltransferase that attaches isoprenoid moieties to carbon atoms of aromatic substrates in an enzyme-catalyzed Friedel-Crafts reaction (PubMed:20351110). Shows specificity for dimethylallyl diphosphate (DMAPP) and does not accept geranyl diphosphate (GPP) or isopentenyl diphosphate (IPP) (PubMed:20351110). Prenylates the artificial substrate 2,7-dihydroxynaphthalene (2,7-DHN), as well as dihydrophenazine-1-carboxylic acid at a lower level (PubMed:20351110). Only traces of products are detected with aspulvinone E, flaviolin, or 4-hydroxybenzoic acid as substrates; and no product is formed with L-tryptophan, L-tyrosine, or 4-hydroxyphenylpyruvate (PubMed:20351110). Ptf seems no to be involved in the prenylation reaction in the biosynthesis of aspulvinone H and J and the physiological function of ptf remains unknown (PubMed:20351110).</text>
</comment>
<comment type="biophysicochemical properties">
    <kinetics>
        <KM evidence="1">325 uM for DMAPP</KM>
        <KM evidence="1">324 uM for 2,7-dihydroxynaphthalene</KM>
    </kinetics>
    <phDependence>
        <text evidence="1">Optimum pH is 8.7.</text>
    </phDependence>
</comment>
<comment type="miscellaneous">
    <text evidence="1">The gene is not located within a recognizable secondary metabolic gene cluster.</text>
</comment>
<comment type="similarity">
    <text evidence="3">Belongs to the aromatic prenyltransferase family.</text>
</comment>
<gene>
    <name evidence="2" type="primary">ptf</name>
    <name type="ORF">ATEG_00821</name>
</gene>
<evidence type="ECO:0000269" key="1">
    <source>
    </source>
</evidence>
<evidence type="ECO:0000303" key="2">
    <source>
    </source>
</evidence>
<evidence type="ECO:0000305" key="3"/>
<feature type="chain" id="PRO_0000455461" description="Aromatic prenyltransferase">
    <location>
        <begin position="1"/>
        <end position="336"/>
    </location>
</feature>
<keyword id="KW-0637">Prenyltransferase</keyword>
<keyword id="KW-1185">Reference proteome</keyword>
<keyword id="KW-0808">Transferase</keyword>
<sequence length="336" mass="37289">MIQQVQQAVFDPERFLVDIEETCRAIGAPYSQEKTLKVLEGFQASFARGAVLWRITNRPGDALNYRFYERVSIDAVSCAVEAKLFQPNHPLSELIVSWTALYPGAAQQSCDFDAEQGFSKIWVYLGDMRPLSDILSAPHVPLSIRKHATTFYNLGLELVRHVAADFTSNTINIYFRVQGLLTLERARSLVRLSDPAYLLECGEVEEMRRLLNPVGFTFAVTMDYSTGDIKRVGIYALKLAPGTYPAMDERLKATRAIPLEKQAYILLSQGVLMAKEVAAAFPVPSETAAVNRPREVDVEVGVGVASFMFQPTTPIAPTVDVRDNVVVAVFHAVESP</sequence>
<dbReference type="EC" id="2.5.1.-" evidence="1"/>
<dbReference type="EMBL" id="CH476594">
    <property type="protein sequence ID" value="EAU39467.1"/>
    <property type="molecule type" value="Genomic_DNA"/>
</dbReference>
<dbReference type="RefSeq" id="XP_001210907.1">
    <property type="nucleotide sequence ID" value="XM_001210907.1"/>
</dbReference>
<dbReference type="SMR" id="Q0CZR3"/>
<dbReference type="EnsemblFungi" id="EAU39467">
    <property type="protein sequence ID" value="EAU39467"/>
    <property type="gene ID" value="ATEG_00821"/>
</dbReference>
<dbReference type="GeneID" id="4355582"/>
<dbReference type="VEuPathDB" id="FungiDB:ATEG_00821"/>
<dbReference type="eggNOG" id="ENOG502SMTG">
    <property type="taxonomic scope" value="Eukaryota"/>
</dbReference>
<dbReference type="HOGENOM" id="CLU_826338_0_0_1"/>
<dbReference type="OMA" id="ALNYRFY"/>
<dbReference type="OrthoDB" id="3913316at2759"/>
<dbReference type="BRENDA" id="2.5.1.B25">
    <property type="organism ID" value="536"/>
</dbReference>
<dbReference type="Proteomes" id="UP000007963">
    <property type="component" value="Unassembled WGS sequence"/>
</dbReference>
<dbReference type="GO" id="GO:0004659">
    <property type="term" value="F:prenyltransferase activity"/>
    <property type="evidence" value="ECO:0007669"/>
    <property type="project" value="UniProtKB-KW"/>
</dbReference>
<dbReference type="InterPro" id="IPR033964">
    <property type="entry name" value="Aro_prenylTrfase"/>
</dbReference>
<dbReference type="InterPro" id="IPR020965">
    <property type="entry name" value="Prenyltransferase_CloQ"/>
</dbReference>
<dbReference type="InterPro" id="IPR036239">
    <property type="entry name" value="PrenylTrfase-like_sf"/>
</dbReference>
<dbReference type="Pfam" id="PF11468">
    <property type="entry name" value="PTase_Orf2"/>
    <property type="match status" value="1"/>
</dbReference>
<dbReference type="SFLD" id="SFLDS00036">
    <property type="entry name" value="Aromatic_Prenyltransferase"/>
    <property type="match status" value="1"/>
</dbReference>
<dbReference type="SFLD" id="SFLDG01163">
    <property type="entry name" value="II"/>
    <property type="match status" value="1"/>
</dbReference>
<dbReference type="SUPFAM" id="SSF143492">
    <property type="entry name" value="Prenyltransferase-like"/>
    <property type="match status" value="1"/>
</dbReference>